<accession>B5E6H0</accession>
<keyword id="KW-0687">Ribonucleoprotein</keyword>
<keyword id="KW-0689">Ribosomal protein</keyword>
<keyword id="KW-0694">RNA-binding</keyword>
<keyword id="KW-0699">rRNA-binding</keyword>
<protein>
    <recommendedName>
        <fullName evidence="1">Large ribosomal subunit protein uL6</fullName>
    </recommendedName>
    <alternativeName>
        <fullName evidence="2">50S ribosomal protein L6</fullName>
    </alternativeName>
</protein>
<evidence type="ECO:0000255" key="1">
    <source>
        <dbReference type="HAMAP-Rule" id="MF_01365"/>
    </source>
</evidence>
<evidence type="ECO:0000305" key="2"/>
<proteinExistence type="inferred from homology"/>
<gene>
    <name evidence="1" type="primary">rplF</name>
    <name type="ordered locus">SPG_0210</name>
</gene>
<reference key="1">
    <citation type="journal article" date="2001" name="Microb. Drug Resist.">
        <title>Annotated draft genomic sequence from a Streptococcus pneumoniae type 19F clinical isolate.</title>
        <authorList>
            <person name="Dopazo J."/>
            <person name="Mendoza A."/>
            <person name="Herrero J."/>
            <person name="Caldara F."/>
            <person name="Humbert Y."/>
            <person name="Friedli L."/>
            <person name="Guerrier M."/>
            <person name="Grand-Schenk E."/>
            <person name="Gandin C."/>
            <person name="de Francesco M."/>
            <person name="Polissi A."/>
            <person name="Buell G."/>
            <person name="Feger G."/>
            <person name="Garcia E."/>
            <person name="Peitsch M."/>
            <person name="Garcia-Bustos J.F."/>
        </authorList>
    </citation>
    <scope>NUCLEOTIDE SEQUENCE [LARGE SCALE GENOMIC DNA]</scope>
    <source>
        <strain>G54</strain>
    </source>
</reference>
<reference key="2">
    <citation type="submission" date="2008-03" db="EMBL/GenBank/DDBJ databases">
        <title>Pneumococcal beta glucoside metabolism investigated by whole genome comparison.</title>
        <authorList>
            <person name="Mulas L."/>
            <person name="Trappetti C."/>
            <person name="Hakenbeck R."/>
            <person name="Iannelli F."/>
            <person name="Pozzi G."/>
            <person name="Davidsen T.M."/>
            <person name="Tettelin H."/>
            <person name="Oggioni M."/>
        </authorList>
    </citation>
    <scope>NUCLEOTIDE SEQUENCE [LARGE SCALE GENOMIC DNA]</scope>
    <source>
        <strain>G54</strain>
    </source>
</reference>
<sequence>MSRIGNKVIVLPAGVELANNDNVVTVKGPKGELTREFSKDIEIRVEGTEITXHRPNDSKEMKTIHGTTRALLNNMVVGVSEGFKKELEMRGVGYRAQLQGSKLVLAVGKSHPDEVEAPEGITFELPNPTTIVVSGISKEVVGQTAAYVRSLRSPEPYKGKGIRYVGEFVRRKEGKTGK</sequence>
<name>RL6_STRP4</name>
<comment type="function">
    <text evidence="1">This protein binds to the 23S rRNA, and is important in its secondary structure. It is located near the subunit interface in the base of the L7/L12 stalk, and near the tRNA binding site of the peptidyltransferase center.</text>
</comment>
<comment type="subunit">
    <text evidence="1">Part of the 50S ribosomal subunit.</text>
</comment>
<comment type="similarity">
    <text evidence="1">Belongs to the universal ribosomal protein uL6 family.</text>
</comment>
<feature type="chain" id="PRO_1000144055" description="Large ribosomal subunit protein uL6">
    <location>
        <begin position="1"/>
        <end position="178"/>
    </location>
</feature>
<organism>
    <name type="scientific">Streptococcus pneumoniae serotype 19F (strain G54)</name>
    <dbReference type="NCBI Taxonomy" id="512566"/>
    <lineage>
        <taxon>Bacteria</taxon>
        <taxon>Bacillati</taxon>
        <taxon>Bacillota</taxon>
        <taxon>Bacilli</taxon>
        <taxon>Lactobacillales</taxon>
        <taxon>Streptococcaceae</taxon>
        <taxon>Streptococcus</taxon>
    </lineage>
</organism>
<dbReference type="EMBL" id="CP001015">
    <property type="protein sequence ID" value="ACF54978.1"/>
    <property type="molecule type" value="Genomic_DNA"/>
</dbReference>
<dbReference type="KEGG" id="spx:SPG_0210"/>
<dbReference type="HOGENOM" id="CLU_065464_1_2_9"/>
<dbReference type="GO" id="GO:0022625">
    <property type="term" value="C:cytosolic large ribosomal subunit"/>
    <property type="evidence" value="ECO:0007669"/>
    <property type="project" value="TreeGrafter"/>
</dbReference>
<dbReference type="GO" id="GO:0019843">
    <property type="term" value="F:rRNA binding"/>
    <property type="evidence" value="ECO:0007669"/>
    <property type="project" value="UniProtKB-UniRule"/>
</dbReference>
<dbReference type="GO" id="GO:0003735">
    <property type="term" value="F:structural constituent of ribosome"/>
    <property type="evidence" value="ECO:0007669"/>
    <property type="project" value="InterPro"/>
</dbReference>
<dbReference type="GO" id="GO:0002181">
    <property type="term" value="P:cytoplasmic translation"/>
    <property type="evidence" value="ECO:0007669"/>
    <property type="project" value="TreeGrafter"/>
</dbReference>
<dbReference type="FunFam" id="3.90.930.12:FF:000001">
    <property type="entry name" value="50S ribosomal protein L6"/>
    <property type="match status" value="1"/>
</dbReference>
<dbReference type="FunFam" id="3.90.930.12:FF:000002">
    <property type="entry name" value="50S ribosomal protein L6"/>
    <property type="match status" value="1"/>
</dbReference>
<dbReference type="Gene3D" id="3.90.930.12">
    <property type="entry name" value="Ribosomal protein L6, alpha-beta domain"/>
    <property type="match status" value="2"/>
</dbReference>
<dbReference type="HAMAP" id="MF_01365_B">
    <property type="entry name" value="Ribosomal_uL6_B"/>
    <property type="match status" value="1"/>
</dbReference>
<dbReference type="InterPro" id="IPR000702">
    <property type="entry name" value="Ribosomal_uL6-like"/>
</dbReference>
<dbReference type="InterPro" id="IPR036789">
    <property type="entry name" value="Ribosomal_uL6-like_a/b-dom_sf"/>
</dbReference>
<dbReference type="InterPro" id="IPR020040">
    <property type="entry name" value="Ribosomal_uL6_a/b-dom"/>
</dbReference>
<dbReference type="InterPro" id="IPR019906">
    <property type="entry name" value="Ribosomal_uL6_bac-type"/>
</dbReference>
<dbReference type="InterPro" id="IPR002358">
    <property type="entry name" value="Ribosomal_uL6_CS"/>
</dbReference>
<dbReference type="NCBIfam" id="TIGR03654">
    <property type="entry name" value="L6_bact"/>
    <property type="match status" value="1"/>
</dbReference>
<dbReference type="PANTHER" id="PTHR11655">
    <property type="entry name" value="60S/50S RIBOSOMAL PROTEIN L6/L9"/>
    <property type="match status" value="1"/>
</dbReference>
<dbReference type="PANTHER" id="PTHR11655:SF14">
    <property type="entry name" value="LARGE RIBOSOMAL SUBUNIT PROTEIN UL6M"/>
    <property type="match status" value="1"/>
</dbReference>
<dbReference type="Pfam" id="PF00347">
    <property type="entry name" value="Ribosomal_L6"/>
    <property type="match status" value="2"/>
</dbReference>
<dbReference type="PIRSF" id="PIRSF002162">
    <property type="entry name" value="Ribosomal_L6"/>
    <property type="match status" value="1"/>
</dbReference>
<dbReference type="PRINTS" id="PR00059">
    <property type="entry name" value="RIBOSOMALL6"/>
</dbReference>
<dbReference type="SUPFAM" id="SSF56053">
    <property type="entry name" value="Ribosomal protein L6"/>
    <property type="match status" value="2"/>
</dbReference>
<dbReference type="PROSITE" id="PS00525">
    <property type="entry name" value="RIBOSOMAL_L6_1"/>
    <property type="match status" value="1"/>
</dbReference>